<proteinExistence type="evidence at transcript level"/>
<protein>
    <recommendedName>
        <fullName>Complement component C6</fullName>
    </recommendedName>
</protein>
<accession>P61135</accession>
<dbReference type="EMBL" id="AB126594">
    <property type="protein sequence ID" value="BAD02323.1"/>
    <property type="molecule type" value="mRNA"/>
</dbReference>
<dbReference type="EMBL" id="AB126596">
    <property type="protein sequence ID" value="BAD02325.1"/>
    <property type="molecule type" value="Genomic_DNA"/>
</dbReference>
<dbReference type="SMR" id="P61135"/>
<dbReference type="GlyCosmos" id="P61135">
    <property type="glycosylation" value="10 sites, No reported glycans"/>
</dbReference>
<dbReference type="GO" id="GO:0005576">
    <property type="term" value="C:extracellular region"/>
    <property type="evidence" value="ECO:0007669"/>
    <property type="project" value="UniProtKB-SubCell"/>
</dbReference>
<dbReference type="GO" id="GO:0005579">
    <property type="term" value="C:membrane attack complex"/>
    <property type="evidence" value="ECO:0007669"/>
    <property type="project" value="UniProtKB-KW"/>
</dbReference>
<dbReference type="GO" id="GO:0006958">
    <property type="term" value="P:complement activation, classical pathway"/>
    <property type="evidence" value="ECO:0007669"/>
    <property type="project" value="UniProtKB-KW"/>
</dbReference>
<dbReference type="GO" id="GO:0045087">
    <property type="term" value="P:innate immune response"/>
    <property type="evidence" value="ECO:0007669"/>
    <property type="project" value="UniProtKB-KW"/>
</dbReference>
<dbReference type="GO" id="GO:0031640">
    <property type="term" value="P:killing of cells of another organism"/>
    <property type="evidence" value="ECO:0007669"/>
    <property type="project" value="UniProtKB-KW"/>
</dbReference>
<dbReference type="CDD" id="cd00033">
    <property type="entry name" value="CCP"/>
    <property type="match status" value="2"/>
</dbReference>
<dbReference type="CDD" id="cd00112">
    <property type="entry name" value="LDLa"/>
    <property type="match status" value="1"/>
</dbReference>
<dbReference type="FunFam" id="2.10.70.10:FF:000082">
    <property type="entry name" value="Complement component C6"/>
    <property type="match status" value="1"/>
</dbReference>
<dbReference type="FunFam" id="2.10.70.10:FF:000093">
    <property type="entry name" value="Complement component C6"/>
    <property type="match status" value="1"/>
</dbReference>
<dbReference type="FunFam" id="2.20.100.10:FF:000087">
    <property type="entry name" value="Complement component C6"/>
    <property type="match status" value="1"/>
</dbReference>
<dbReference type="FunFam" id="3.30.60.30:FF:000046">
    <property type="entry name" value="Complement component C6"/>
    <property type="match status" value="1"/>
</dbReference>
<dbReference type="FunFam" id="3.30.60.30:FF:000047">
    <property type="entry name" value="Complement component C6"/>
    <property type="match status" value="1"/>
</dbReference>
<dbReference type="FunFam" id="4.10.400.10:FF:000065">
    <property type="entry name" value="Transmembrane protease serine 7"/>
    <property type="match status" value="1"/>
</dbReference>
<dbReference type="FunFam" id="2.20.100.10:FF:000002">
    <property type="entry name" value="Unc-5 netrin receptor C"/>
    <property type="match status" value="1"/>
</dbReference>
<dbReference type="Gene3D" id="3.30.60.30">
    <property type="match status" value="2"/>
</dbReference>
<dbReference type="Gene3D" id="2.10.70.10">
    <property type="entry name" value="Complement Module, domain 1"/>
    <property type="match status" value="2"/>
</dbReference>
<dbReference type="Gene3D" id="4.10.400.10">
    <property type="entry name" value="Low-density Lipoprotein Receptor"/>
    <property type="match status" value="1"/>
</dbReference>
<dbReference type="Gene3D" id="2.20.100.10">
    <property type="entry name" value="Thrombospondin type-1 (TSP1) repeat"/>
    <property type="match status" value="3"/>
</dbReference>
<dbReference type="InterPro" id="IPR048828">
    <property type="entry name" value="C6_KAZAL"/>
</dbReference>
<dbReference type="InterPro" id="IPR048831">
    <property type="entry name" value="C8A_B_C6_EGF-like"/>
</dbReference>
<dbReference type="InterPro" id="IPR003884">
    <property type="entry name" value="FacI_MAC"/>
</dbReference>
<dbReference type="InterPro" id="IPR002350">
    <property type="entry name" value="Kazal_dom"/>
</dbReference>
<dbReference type="InterPro" id="IPR036055">
    <property type="entry name" value="LDL_receptor-like_sf"/>
</dbReference>
<dbReference type="InterPro" id="IPR023415">
    <property type="entry name" value="LDLR_class-A_CS"/>
</dbReference>
<dbReference type="InterPro" id="IPR002172">
    <property type="entry name" value="LDrepeatLR_classA_rpt"/>
</dbReference>
<dbReference type="InterPro" id="IPR001862">
    <property type="entry name" value="MAC_perforin"/>
</dbReference>
<dbReference type="InterPro" id="IPR020864">
    <property type="entry name" value="MACPF"/>
</dbReference>
<dbReference type="InterPro" id="IPR020863">
    <property type="entry name" value="MACPF_CS"/>
</dbReference>
<dbReference type="InterPro" id="IPR035976">
    <property type="entry name" value="Sushi/SCR/CCP_sf"/>
</dbReference>
<dbReference type="InterPro" id="IPR000436">
    <property type="entry name" value="Sushi_SCR_CCP_dom"/>
</dbReference>
<dbReference type="InterPro" id="IPR000884">
    <property type="entry name" value="TSP1_rpt"/>
</dbReference>
<dbReference type="InterPro" id="IPR036383">
    <property type="entry name" value="TSP1_rpt_sf"/>
</dbReference>
<dbReference type="PANTHER" id="PTHR45742">
    <property type="entry name" value="COMPLEMENT COMPONENT C6"/>
    <property type="match status" value="1"/>
</dbReference>
<dbReference type="PANTHER" id="PTHR45742:SF4">
    <property type="entry name" value="COMPLEMENT COMPONENT C6"/>
    <property type="match status" value="1"/>
</dbReference>
<dbReference type="Pfam" id="PF21195">
    <property type="entry name" value="EGF_C8A_B_C6"/>
    <property type="match status" value="1"/>
</dbReference>
<dbReference type="Pfam" id="PF21288">
    <property type="entry name" value="Kazal_C6"/>
    <property type="match status" value="1"/>
</dbReference>
<dbReference type="Pfam" id="PF00057">
    <property type="entry name" value="Ldl_recept_a"/>
    <property type="match status" value="1"/>
</dbReference>
<dbReference type="Pfam" id="PF01823">
    <property type="entry name" value="MACPF"/>
    <property type="match status" value="1"/>
</dbReference>
<dbReference type="Pfam" id="PF00084">
    <property type="entry name" value="Sushi"/>
    <property type="match status" value="2"/>
</dbReference>
<dbReference type="Pfam" id="PF00090">
    <property type="entry name" value="TSP_1"/>
    <property type="match status" value="3"/>
</dbReference>
<dbReference type="PRINTS" id="PR00764">
    <property type="entry name" value="COMPLEMENTC9"/>
</dbReference>
<dbReference type="SMART" id="SM00032">
    <property type="entry name" value="CCP"/>
    <property type="match status" value="2"/>
</dbReference>
<dbReference type="SMART" id="SM00057">
    <property type="entry name" value="FIMAC"/>
    <property type="match status" value="2"/>
</dbReference>
<dbReference type="SMART" id="SM00192">
    <property type="entry name" value="LDLa"/>
    <property type="match status" value="1"/>
</dbReference>
<dbReference type="SMART" id="SM00457">
    <property type="entry name" value="MACPF"/>
    <property type="match status" value="1"/>
</dbReference>
<dbReference type="SMART" id="SM00209">
    <property type="entry name" value="TSP1"/>
    <property type="match status" value="3"/>
</dbReference>
<dbReference type="SUPFAM" id="SSF57535">
    <property type="entry name" value="Complement control module/SCR domain"/>
    <property type="match status" value="2"/>
</dbReference>
<dbReference type="SUPFAM" id="SSF57424">
    <property type="entry name" value="LDL receptor-like module"/>
    <property type="match status" value="1"/>
</dbReference>
<dbReference type="SUPFAM" id="SSF82895">
    <property type="entry name" value="TSP-1 type 1 repeat"/>
    <property type="match status" value="3"/>
</dbReference>
<dbReference type="PROSITE" id="PS00022">
    <property type="entry name" value="EGF_1"/>
    <property type="match status" value="1"/>
</dbReference>
<dbReference type="PROSITE" id="PS51465">
    <property type="entry name" value="KAZAL_2"/>
    <property type="match status" value="2"/>
</dbReference>
<dbReference type="PROSITE" id="PS01209">
    <property type="entry name" value="LDLRA_1"/>
    <property type="match status" value="1"/>
</dbReference>
<dbReference type="PROSITE" id="PS50068">
    <property type="entry name" value="LDLRA_2"/>
    <property type="match status" value="1"/>
</dbReference>
<dbReference type="PROSITE" id="PS00279">
    <property type="entry name" value="MACPF_1"/>
    <property type="match status" value="1"/>
</dbReference>
<dbReference type="PROSITE" id="PS51412">
    <property type="entry name" value="MACPF_2"/>
    <property type="match status" value="1"/>
</dbReference>
<dbReference type="PROSITE" id="PS50923">
    <property type="entry name" value="SUSHI"/>
    <property type="match status" value="2"/>
</dbReference>
<dbReference type="PROSITE" id="PS50092">
    <property type="entry name" value="TSP1"/>
    <property type="match status" value="3"/>
</dbReference>
<reference key="1">
    <citation type="submission" date="2003-11" db="EMBL/GenBank/DDBJ databases">
        <title>Sequence variation in C6 locus.</title>
        <authorList>
            <person name="Soejima M."/>
            <person name="Koda Y."/>
        </authorList>
    </citation>
    <scope>NUCLEOTIDE SEQUENCE [GENOMIC DNA / MRNA]</scope>
</reference>
<gene>
    <name type="primary">C6</name>
</gene>
<comment type="function">
    <text evidence="1">Component of the membrane attack complex (MAC), a multiprotein complex activated by the complement cascade, which inserts into a target cell membrane and forms a pore, leading to target cell membrane rupture and cell lysis. The MAC is initiated by proteolytic cleavage of C5 into complement C5b in response to the classical, alternative, lectin and GZMK complement pathways. The complement pathways consist in a cascade of proteins that leads to phagocytosis and breakdown of pathogens and signaling that strengthens the adaptive immune system. Together with component C5b, involved in MAC complex assembly: complement C5b and C6 associate with the outer leaflet of target cell membrane, reducing the energy for membrane bending.</text>
</comment>
<comment type="activity regulation">
    <text evidence="1">Membrane attack complex (MAC) assembly is inhibited by CD59, thereby protecting self-cells from damage during complement activation. MAC assembly is also inhibited by clusterin (CLU) chaperones that inhibit polymerization of C9.</text>
</comment>
<comment type="subunit">
    <text evidence="1">Component of the membrane attack complex (MAC), composed of complement C5b, C6, C7, C8A, C8B, C8G and multiple copies of the pore-forming subunit C9.</text>
</comment>
<comment type="subcellular location">
    <subcellularLocation>
        <location evidence="1">Secreted</location>
    </subcellularLocation>
    <subcellularLocation>
        <location evidence="1">Target cell membrane</location>
        <topology evidence="1">Multi-pass membrane protein</topology>
    </subcellularLocation>
    <text evidence="1">Secreted as soluble protein. Inserts into the cell membrane of target cells.</text>
</comment>
<comment type="PTM">
    <text evidence="1">All cysteine residues are assumed to be cross-linked to one another. Individual modules containing an even number of conserved cysteine residues are supposed to have disulfide linkages only within the same module.</text>
</comment>
<comment type="similarity">
    <text evidence="8">Belongs to the complement C6/C7/C8/C9 family.</text>
</comment>
<organism>
    <name type="scientific">Pongo pygmaeus</name>
    <name type="common">Bornean orangutan</name>
    <dbReference type="NCBI Taxonomy" id="9600"/>
    <lineage>
        <taxon>Eukaryota</taxon>
        <taxon>Metazoa</taxon>
        <taxon>Chordata</taxon>
        <taxon>Craniata</taxon>
        <taxon>Vertebrata</taxon>
        <taxon>Euteleostomi</taxon>
        <taxon>Mammalia</taxon>
        <taxon>Eutheria</taxon>
        <taxon>Euarchontoglires</taxon>
        <taxon>Primates</taxon>
        <taxon>Haplorrhini</taxon>
        <taxon>Catarrhini</taxon>
        <taxon>Hominidae</taxon>
        <taxon>Pongo</taxon>
    </lineage>
</organism>
<sequence>MARCSVLYFILLSALINKGQACFCDHYPWTQWTSCSKTCNSGTQSRHRQIVVDKYYQENFCEQICSKQETRECNWQRCPINCLLGDFGPWSDCDPCVEKQSKVRSVLRPSQFGGQPCTEPLVAFQPCIPSKLCKIEEADCKNKFRCDSGRCIARKLECNGENDCGDNSDERDCGRTKAVCTRKYDPIPSVQLMGSGFHFLAGEPRGEVLDNSFTGGICKTVKSSRTSNPYRVPANLENVGFEVQTAEDDLKTDFYKDLTSLGHNENQQGSFSSQGGSSFSVPIFYSSKRSENINHNSAFKQAIQASHKKDSSFIRIHKVMKVLNFTTKAKDLHLSDIFLKALNHLPLEYNSALYSRIFDDFGTHYFTSGSLGGVYDLLYQFSSEELKNSGLTEEEAKHCVRIETKKRVLFAKKTKVEHRCTTNKLSEKHEGSFIEGAEKSISLIRGGRSEYAAALAWEKGSSGLEEKTFSEWLESVKENPAVIDFELAPIVDLVRNIPCAVTKRNNLRKAFQEYAAKFDPCQCAPCPNNGRPTLSGTECLCVCQSGTYGENCERRSPDYKSNAVDGHWGCWSSWSTCDATYKRSRTRECNNPAPQRGGKHCEGEKRQEEDCTFSIMENNGQPCINDDEEMKEIDLPEIEADSGCPQPIPPENGFIRNEKKLYSVGEDVEILCLTGFETVGYQYFRCLPDGTWRQGDVECQRTECIKPVVQEVLTITPFQRLYRIGESIELTCPKGFVVAGPSRYTCQGNSWTPPISNSLTCEKDTLIKLKGHCQPGQKQSGSECICMYPEEDCSHYSEDLCVFDTDSNDYFTSPACKFLAEKCLNNQQLHFLHIGSCQDGRQLEWGLERARFSSNSTKKESCGYDTCYDWEKCSASTSKCVCLLPPQCFKGGNQLYCVKMGSSTSEKTLNICEVGAIRCANRKMEILHPGKCLA</sequence>
<evidence type="ECO:0000250" key="1">
    <source>
        <dbReference type="UniProtKB" id="P13671"/>
    </source>
</evidence>
<evidence type="ECO:0000255" key="2"/>
<evidence type="ECO:0000255" key="3">
    <source>
        <dbReference type="PROSITE-ProRule" id="PRU00124"/>
    </source>
</evidence>
<evidence type="ECO:0000255" key="4">
    <source>
        <dbReference type="PROSITE-ProRule" id="PRU00210"/>
    </source>
</evidence>
<evidence type="ECO:0000255" key="5">
    <source>
        <dbReference type="PROSITE-ProRule" id="PRU00302"/>
    </source>
</evidence>
<evidence type="ECO:0000255" key="6">
    <source>
        <dbReference type="PROSITE-ProRule" id="PRU00745"/>
    </source>
</evidence>
<evidence type="ECO:0000255" key="7">
    <source>
        <dbReference type="PROSITE-ProRule" id="PRU00798"/>
    </source>
</evidence>
<evidence type="ECO:0000305" key="8"/>
<feature type="signal peptide" evidence="1">
    <location>
        <begin position="1"/>
        <end position="21"/>
    </location>
</feature>
<feature type="chain" id="PRO_0000023581" description="Complement component C6">
    <location>
        <begin position="22"/>
        <end position="934"/>
    </location>
</feature>
<feature type="transmembrane region" description="Beta stranded" evidence="1">
    <location>
        <begin position="278"/>
        <end position="290"/>
    </location>
</feature>
<feature type="transmembrane region" description="Beta stranded" evidence="1">
    <location>
        <begin position="402"/>
        <end position="415"/>
    </location>
</feature>
<feature type="domain" description="TSP type-1 1" evidence="4">
    <location>
        <begin position="22"/>
        <end position="79"/>
    </location>
</feature>
<feature type="domain" description="TSP type-1 2" evidence="4">
    <location>
        <begin position="81"/>
        <end position="134"/>
    </location>
</feature>
<feature type="domain" description="LDL-receptor class A" evidence="3">
    <location>
        <begin position="138"/>
        <end position="175"/>
    </location>
</feature>
<feature type="domain" description="MACPF" evidence="6">
    <location>
        <begin position="176"/>
        <end position="522"/>
    </location>
</feature>
<feature type="domain" description="EGF-like">
    <location>
        <begin position="523"/>
        <end position="553"/>
    </location>
</feature>
<feature type="domain" description="TSP type-1 3" evidence="4">
    <location>
        <begin position="565"/>
        <end position="612"/>
    </location>
</feature>
<feature type="domain" description="Sushi 1" evidence="5">
    <location>
        <begin position="642"/>
        <end position="701"/>
    </location>
</feature>
<feature type="domain" description="Sushi 2" evidence="5">
    <location>
        <begin position="702"/>
        <end position="763"/>
    </location>
</feature>
<feature type="domain" description="Kazal-like 1" evidence="7">
    <location>
        <begin position="780"/>
        <end position="839"/>
    </location>
</feature>
<feature type="domain" description="Kazal-like 2" evidence="7">
    <location>
        <begin position="876"/>
        <end position="934"/>
    </location>
</feature>
<feature type="region of interest" description="CCP 1">
    <location>
        <begin position="611"/>
        <end position="688"/>
    </location>
</feature>
<feature type="region of interest" description="C5b-binding domain">
    <location>
        <begin position="642"/>
        <end position="934"/>
    </location>
</feature>
<feature type="region of interest" description="CCP 2">
    <location>
        <begin position="689"/>
        <end position="765"/>
    </location>
</feature>
<feature type="region of interest" description="Factor I module (FIM) 1">
    <location>
        <begin position="766"/>
        <end position="840"/>
    </location>
</feature>
<feature type="region of interest" description="Factor I module (FIM) 2">
    <location>
        <begin position="858"/>
        <end position="934"/>
    </location>
</feature>
<feature type="binding site" evidence="1">
    <location>
        <position position="156"/>
    </location>
    <ligand>
        <name>Ca(2+)</name>
        <dbReference type="ChEBI" id="CHEBI:29108"/>
    </ligand>
</feature>
<feature type="binding site" evidence="1">
    <location>
        <position position="159"/>
    </location>
    <ligand>
        <name>Ca(2+)</name>
        <dbReference type="ChEBI" id="CHEBI:29108"/>
    </ligand>
</feature>
<feature type="binding site" evidence="1">
    <location>
        <position position="161"/>
    </location>
    <ligand>
        <name>Ca(2+)</name>
        <dbReference type="ChEBI" id="CHEBI:29108"/>
    </ligand>
</feature>
<feature type="binding site" evidence="1">
    <location>
        <position position="163"/>
    </location>
    <ligand>
        <name>Ca(2+)</name>
        <dbReference type="ChEBI" id="CHEBI:29108"/>
    </ligand>
</feature>
<feature type="binding site" evidence="1">
    <location>
        <position position="169"/>
    </location>
    <ligand>
        <name>Ca(2+)</name>
        <dbReference type="ChEBI" id="CHEBI:29108"/>
    </ligand>
</feature>
<feature type="binding site" evidence="1">
    <location>
        <position position="170"/>
    </location>
    <ligand>
        <name>Ca(2+)</name>
        <dbReference type="ChEBI" id="CHEBI:29108"/>
    </ligand>
</feature>
<feature type="glycosylation site" description="C-linked (Man) tryptophan" evidence="1">
    <location>
        <position position="29"/>
    </location>
</feature>
<feature type="glycosylation site" description="C-linked (Man) tryptophan" evidence="1">
    <location>
        <position position="32"/>
    </location>
</feature>
<feature type="glycosylation site" description="O-linked (Fuc...) threonine" evidence="1">
    <location>
        <position position="38"/>
    </location>
</feature>
<feature type="glycosylation site" description="C-linked (Man) tryptophan" evidence="1">
    <location>
        <position position="90"/>
    </location>
</feature>
<feature type="glycosylation site" description="N-linked (GlcNAc...) asparagine" evidence="2">
    <location>
        <position position="324"/>
    </location>
</feature>
<feature type="glycosylation site" description="O-linked (Fuc...) threonine" evidence="1">
    <location>
        <position position="392"/>
    </location>
</feature>
<feature type="glycosylation site" description="C-linked (Man) tryptophan" evidence="1">
    <location>
        <position position="568"/>
    </location>
</feature>
<feature type="glycosylation site" description="C-linked (Man) tryptophan" evidence="1">
    <location>
        <position position="571"/>
    </location>
</feature>
<feature type="glycosylation site" description="C-linked (Man) tryptophan" evidence="1">
    <location>
        <position position="574"/>
    </location>
</feature>
<feature type="glycosylation site" description="N-linked (GlcNAc...) asparagine" evidence="2">
    <location>
        <position position="855"/>
    </location>
</feature>
<feature type="disulfide bond" evidence="1">
    <location>
        <begin position="22"/>
        <end position="61"/>
    </location>
</feature>
<feature type="disulfide bond" evidence="1">
    <location>
        <begin position="24"/>
        <end position="65"/>
    </location>
</feature>
<feature type="disulfide bond" evidence="1">
    <location>
        <begin position="35"/>
        <end position="73"/>
    </location>
</feature>
<feature type="disulfide bond" evidence="1">
    <location>
        <begin position="39"/>
        <end position="78"/>
    </location>
</feature>
<feature type="disulfide bond" evidence="1">
    <location>
        <begin position="82"/>
        <end position="117"/>
    </location>
</feature>
<feature type="disulfide bond" evidence="1">
    <location>
        <begin position="93"/>
        <end position="127"/>
    </location>
</feature>
<feature type="disulfide bond" evidence="1">
    <location>
        <begin position="96"/>
        <end position="133"/>
    </location>
</feature>
<feature type="disulfide bond" evidence="1">
    <location>
        <begin position="140"/>
        <end position="151"/>
    </location>
</feature>
<feature type="disulfide bond" evidence="1">
    <location>
        <begin position="146"/>
        <end position="164"/>
    </location>
</feature>
<feature type="disulfide bond" evidence="1">
    <location>
        <begin position="158"/>
        <end position="173"/>
    </location>
</feature>
<feature type="disulfide bond" evidence="1">
    <location>
        <begin position="180"/>
        <end position="218"/>
    </location>
</feature>
<feature type="disulfide bond" evidence="1">
    <location>
        <begin position="399"/>
        <end position="420"/>
    </location>
</feature>
<feature type="disulfide bond" evidence="1">
    <location>
        <begin position="499"/>
        <end position="623"/>
    </location>
</feature>
<feature type="disulfide bond" evidence="1">
    <location>
        <begin position="521"/>
        <end position="570"/>
    </location>
</feature>
<feature type="disulfide bond" evidence="1">
    <location>
        <begin position="523"/>
        <end position="539"/>
    </location>
</feature>
<feature type="disulfide bond" evidence="1">
    <location>
        <begin position="526"/>
        <end position="541"/>
    </location>
</feature>
<feature type="disulfide bond" evidence="1">
    <location>
        <begin position="543"/>
        <end position="552"/>
    </location>
</feature>
<feature type="disulfide bond" evidence="1">
    <location>
        <begin position="577"/>
        <end position="611"/>
    </location>
</feature>
<feature type="disulfide bond" evidence="1">
    <location>
        <begin position="589"/>
        <end position="601"/>
    </location>
</feature>
<feature type="disulfide bond" evidence="1">
    <location>
        <begin position="644"/>
        <end position="686"/>
    </location>
</feature>
<feature type="disulfide bond" evidence="1">
    <location>
        <begin position="672"/>
        <end position="699"/>
    </location>
</feature>
<feature type="disulfide bond" evidence="1">
    <location>
        <begin position="704"/>
        <end position="746"/>
    </location>
</feature>
<feature type="disulfide bond" evidence="1">
    <location>
        <begin position="732"/>
        <end position="761"/>
    </location>
</feature>
<feature type="disulfide bond" evidence="1">
    <location>
        <begin position="773"/>
        <end position="823"/>
    </location>
</feature>
<feature type="disulfide bond" evidence="1">
    <location>
        <begin position="784"/>
        <end position="801"/>
    </location>
</feature>
<feature type="disulfide bond" evidence="1">
    <location>
        <begin position="786"/>
        <end position="837"/>
    </location>
</feature>
<feature type="disulfide bond" evidence="1">
    <location>
        <begin position="793"/>
        <end position="816"/>
    </location>
</feature>
<feature type="disulfide bond" evidence="1">
    <location>
        <begin position="862"/>
        <end position="873"/>
    </location>
</feature>
<feature type="disulfide bond" evidence="1">
    <location>
        <begin position="867"/>
        <end position="919"/>
    </location>
</feature>
<feature type="disulfide bond" evidence="1">
    <location>
        <begin position="880"/>
        <end position="897"/>
    </location>
</feature>
<feature type="disulfide bond" evidence="1">
    <location>
        <begin position="882"/>
        <end position="932"/>
    </location>
</feature>
<feature type="disulfide bond" evidence="1">
    <location>
        <begin position="888"/>
        <end position="912"/>
    </location>
</feature>
<name>CO6_PONPY</name>
<keyword id="KW-0106">Calcium</keyword>
<keyword id="KW-0180">Complement pathway</keyword>
<keyword id="KW-0204">Cytolysis</keyword>
<keyword id="KW-1015">Disulfide bond</keyword>
<keyword id="KW-0245">EGF-like domain</keyword>
<keyword id="KW-0325">Glycoprotein</keyword>
<keyword id="KW-0391">Immunity</keyword>
<keyword id="KW-0399">Innate immunity</keyword>
<keyword id="KW-0472">Membrane</keyword>
<keyword id="KW-0473">Membrane attack complex</keyword>
<keyword id="KW-0479">Metal-binding</keyword>
<keyword id="KW-0677">Repeat</keyword>
<keyword id="KW-0964">Secreted</keyword>
<keyword id="KW-0732">Signal</keyword>
<keyword id="KW-0768">Sushi</keyword>
<keyword id="KW-1052">Target cell membrane</keyword>
<keyword id="KW-1053">Target membrane</keyword>
<keyword id="KW-0812">Transmembrane</keyword>
<keyword id="KW-1134">Transmembrane beta strand</keyword>